<sequence>MSVSTPSELDALIEQATSESIPNGDLDLPIALEISDVLRSRRVNPKDSMRCIKKRILNTADNPNTQLSSWKLTNICVKNGGTPFIKEICSREFMDTMEHVILREDSNEELSELVKTILYELYVAFKNDSQLNYVAKVYDKLISRGIKFPEKLTLSNSPTAMFDSKTPADWIDSDACMICSKKFSLLNRKHHCRSCGGVFCQEHSSNSIPLPDLGIYEPVRVCDSCFEDYDLKRHDDSKKSKKHRHKRKKDRDYSTPEDEEELIRKAIELSLKESRNSASSEPIVPVVESKNEVKRQEIEEEEDPDLKAAIQESLREAEEAKLRSERQKASRQMQPQQPSPQPQPIHSVDLSDEEKDSIYMFASLVEKMKSRPLNEILEDSKLQNLAQRVFASKARLNYALNDKAQKYNTLIEMNGKISEIMNIYDRLLEQQLQSINLSQQYTLPQVPSDPYNYLTENVQNPAESYQTPPLQQLSSHQYKPQQDVSRQQSVKANSSPTTNIDHLKTIDVTPHAQQKPQSHVELAPSDPPYPKEEAEDEGTQAVQDEESSTQESRERPYPVETENGETSINKRPQGITRYDFPTVPARKFVQPESTVPLPASSSEIPIKEERPPSPQEELLIEL</sequence>
<proteinExistence type="evidence at protein level"/>
<protein>
    <recommendedName>
        <fullName>Vacuolar protein sorting-associated protein 27</fullName>
    </recommendedName>
    <alternativeName>
        <fullName>Golgi retention defective protein 11</fullName>
    </alternativeName>
</protein>
<organism>
    <name type="scientific">Saccharomyces cerevisiae (strain ATCC 204508 / S288c)</name>
    <name type="common">Baker's yeast</name>
    <dbReference type="NCBI Taxonomy" id="559292"/>
    <lineage>
        <taxon>Eukaryota</taxon>
        <taxon>Fungi</taxon>
        <taxon>Dikarya</taxon>
        <taxon>Ascomycota</taxon>
        <taxon>Saccharomycotina</taxon>
        <taxon>Saccharomycetes</taxon>
        <taxon>Saccharomycetales</taxon>
        <taxon>Saccharomycetaceae</taxon>
        <taxon>Saccharomyces</taxon>
    </lineage>
</organism>
<gene>
    <name type="primary">VPS27</name>
    <name type="synonym">DID7</name>
    <name type="synonym">GRD11</name>
    <name type="synonym">SSV17</name>
    <name type="synonym">VPL23</name>
    <name type="synonym">VPT27</name>
    <name type="ordered locus">YNR006W</name>
    <name type="ORF">N2038</name>
</gene>
<dbReference type="EMBL" id="U24218">
    <property type="protein sequence ID" value="AAA96002.1"/>
    <property type="molecule type" value="Genomic_DNA"/>
</dbReference>
<dbReference type="EMBL" id="X77395">
    <property type="protein sequence ID" value="CAA54574.1"/>
    <property type="molecule type" value="Genomic_DNA"/>
</dbReference>
<dbReference type="EMBL" id="Z71620">
    <property type="protein sequence ID" value="CAA96282.1"/>
    <property type="molecule type" value="Genomic_DNA"/>
</dbReference>
<dbReference type="EMBL" id="BK006947">
    <property type="protein sequence ID" value="DAA10547.1"/>
    <property type="molecule type" value="Genomic_DNA"/>
</dbReference>
<dbReference type="PIR" id="S45129">
    <property type="entry name" value="S45129"/>
</dbReference>
<dbReference type="RefSeq" id="NP_014403.3">
    <property type="nucleotide sequence ID" value="NM_001183183.3"/>
</dbReference>
<dbReference type="PDB" id="1O06">
    <property type="method" value="X-ray"/>
    <property type="resolution" value="1.45 A"/>
    <property type="chains" value="A=301-320"/>
</dbReference>
<dbReference type="PDB" id="1Q0V">
    <property type="method" value="NMR"/>
    <property type="chains" value="A=249-329"/>
</dbReference>
<dbReference type="PDB" id="1Q0W">
    <property type="method" value="NMR"/>
    <property type="chains" value="A=255-278"/>
</dbReference>
<dbReference type="PDB" id="1VFY">
    <property type="method" value="X-ray"/>
    <property type="resolution" value="1.15 A"/>
    <property type="chains" value="A=163-230"/>
</dbReference>
<dbReference type="PDB" id="2KDI">
    <property type="method" value="NMR"/>
    <property type="chains" value="A=258-277"/>
</dbReference>
<dbReference type="PDB" id="2PJW">
    <property type="method" value="X-ray"/>
    <property type="resolution" value="3.01 A"/>
    <property type="chains" value="V=348-438"/>
</dbReference>
<dbReference type="PDB" id="3R42">
    <property type="method" value="X-ray"/>
    <property type="resolution" value="1.87 A"/>
    <property type="chains" value="B=445-453"/>
</dbReference>
<dbReference type="PDB" id="6NJG">
    <property type="method" value="X-ray"/>
    <property type="resolution" value="2.35 A"/>
    <property type="chains" value="B=256-278"/>
</dbReference>
<dbReference type="PDBsum" id="1O06"/>
<dbReference type="PDBsum" id="1Q0V"/>
<dbReference type="PDBsum" id="1Q0W"/>
<dbReference type="PDBsum" id="1VFY"/>
<dbReference type="PDBsum" id="2KDI"/>
<dbReference type="PDBsum" id="2PJW"/>
<dbReference type="PDBsum" id="3R42"/>
<dbReference type="PDBsum" id="6NJG"/>
<dbReference type="SMR" id="P40343"/>
<dbReference type="BioGRID" id="35831">
    <property type="interactions" value="777"/>
</dbReference>
<dbReference type="ComplexPortal" id="CPX-1622">
    <property type="entry name" value="ESCRT-0 complex"/>
</dbReference>
<dbReference type="DIP" id="DIP-1741N"/>
<dbReference type="FunCoup" id="P40343">
    <property type="interactions" value="161"/>
</dbReference>
<dbReference type="IntAct" id="P40343">
    <property type="interactions" value="11"/>
</dbReference>
<dbReference type="MINT" id="P40343"/>
<dbReference type="STRING" id="4932.YNR006W"/>
<dbReference type="TCDB" id="3.A.31.1.1">
    <property type="family name" value="the endosomal sorting complexes required for transport iii (escrt-iii) family"/>
</dbReference>
<dbReference type="iPTMnet" id="P40343"/>
<dbReference type="PaxDb" id="4932-YNR006W"/>
<dbReference type="PeptideAtlas" id="P40343"/>
<dbReference type="EnsemblFungi" id="YNR006W_mRNA">
    <property type="protein sequence ID" value="YNR006W"/>
    <property type="gene ID" value="YNR006W"/>
</dbReference>
<dbReference type="GeneID" id="855739"/>
<dbReference type="KEGG" id="sce:YNR006W"/>
<dbReference type="AGR" id="SGD:S000005289"/>
<dbReference type="SGD" id="S000005289">
    <property type="gene designation" value="VPS27"/>
</dbReference>
<dbReference type="VEuPathDB" id="FungiDB:YNR006W"/>
<dbReference type="eggNOG" id="KOG1818">
    <property type="taxonomic scope" value="Eukaryota"/>
</dbReference>
<dbReference type="GeneTree" id="ENSGT00940000170673"/>
<dbReference type="HOGENOM" id="CLU_011862_2_0_1"/>
<dbReference type="InParanoid" id="P40343"/>
<dbReference type="OMA" id="HTWGGNT"/>
<dbReference type="OrthoDB" id="957735at2759"/>
<dbReference type="BioCyc" id="YEAST:G3O-33324-MONOMER"/>
<dbReference type="BioGRID-ORCS" id="855739">
    <property type="hits" value="3 hits in 10 CRISPR screens"/>
</dbReference>
<dbReference type="EvolutionaryTrace" id="P40343"/>
<dbReference type="PRO" id="PR:P40343"/>
<dbReference type="Proteomes" id="UP000002311">
    <property type="component" value="Chromosome XIV"/>
</dbReference>
<dbReference type="RNAct" id="P40343">
    <property type="molecule type" value="protein"/>
</dbReference>
<dbReference type="GO" id="GO:0005768">
    <property type="term" value="C:endosome"/>
    <property type="evidence" value="ECO:0000314"/>
    <property type="project" value="SGD"/>
</dbReference>
<dbReference type="GO" id="GO:0010008">
    <property type="term" value="C:endosome membrane"/>
    <property type="evidence" value="ECO:0007669"/>
    <property type="project" value="UniProtKB-SubCell"/>
</dbReference>
<dbReference type="GO" id="GO:0033565">
    <property type="term" value="C:ESCRT-0 complex"/>
    <property type="evidence" value="ECO:0000353"/>
    <property type="project" value="SGD"/>
</dbReference>
<dbReference type="GO" id="GO:0032991">
    <property type="term" value="C:protein-containing complex"/>
    <property type="evidence" value="ECO:0000315"/>
    <property type="project" value="CAFA"/>
</dbReference>
<dbReference type="GO" id="GO:0005774">
    <property type="term" value="C:vacuolar membrane"/>
    <property type="evidence" value="ECO:0000314"/>
    <property type="project" value="SGD"/>
</dbReference>
<dbReference type="GO" id="GO:0036435">
    <property type="term" value="F:K48-linked polyubiquitin modification-dependent protein binding"/>
    <property type="evidence" value="ECO:0000314"/>
    <property type="project" value="SGD"/>
</dbReference>
<dbReference type="GO" id="GO:0070530">
    <property type="term" value="F:K63-linked polyubiquitin modification-dependent protein binding"/>
    <property type="evidence" value="ECO:0000314"/>
    <property type="project" value="SGD"/>
</dbReference>
<dbReference type="GO" id="GO:0032266">
    <property type="term" value="F:phosphatidylinositol-3-phosphate binding"/>
    <property type="evidence" value="ECO:0000314"/>
    <property type="project" value="SGD"/>
</dbReference>
<dbReference type="GO" id="GO:0019904">
    <property type="term" value="F:protein domain specific binding"/>
    <property type="evidence" value="ECO:0000353"/>
    <property type="project" value="CAFA"/>
</dbReference>
<dbReference type="GO" id="GO:0046982">
    <property type="term" value="F:protein heterodimerization activity"/>
    <property type="evidence" value="ECO:0000315"/>
    <property type="project" value="CAFA"/>
</dbReference>
<dbReference type="GO" id="GO:0043130">
    <property type="term" value="F:ubiquitin binding"/>
    <property type="evidence" value="ECO:0000314"/>
    <property type="project" value="SGD"/>
</dbReference>
<dbReference type="GO" id="GO:0008270">
    <property type="term" value="F:zinc ion binding"/>
    <property type="evidence" value="ECO:0007669"/>
    <property type="project" value="UniProtKB-KW"/>
</dbReference>
<dbReference type="GO" id="GO:1904669">
    <property type="term" value="P:ATP export"/>
    <property type="evidence" value="ECO:0000315"/>
    <property type="project" value="SGD"/>
</dbReference>
<dbReference type="GO" id="GO:0006995">
    <property type="term" value="P:cellular response to nitrogen starvation"/>
    <property type="evidence" value="ECO:0000315"/>
    <property type="project" value="SGD"/>
</dbReference>
<dbReference type="GO" id="GO:0045324">
    <property type="term" value="P:late endosome to vacuole transport"/>
    <property type="evidence" value="ECO:0000315"/>
    <property type="project" value="SGD"/>
</dbReference>
<dbReference type="GO" id="GO:0016237">
    <property type="term" value="P:microautophagy"/>
    <property type="evidence" value="ECO:0000315"/>
    <property type="project" value="SGD"/>
</dbReference>
<dbReference type="GO" id="GO:0140504">
    <property type="term" value="P:microlipophagy"/>
    <property type="evidence" value="ECO:0000315"/>
    <property type="project" value="SGD"/>
</dbReference>
<dbReference type="GO" id="GO:0071985">
    <property type="term" value="P:multivesicular body sorting pathway"/>
    <property type="evidence" value="ECO:0000315"/>
    <property type="project" value="CAFA"/>
</dbReference>
<dbReference type="GO" id="GO:1903319">
    <property type="term" value="P:positive regulation of protein maturation"/>
    <property type="evidence" value="ECO:0000315"/>
    <property type="project" value="CAFA"/>
</dbReference>
<dbReference type="GO" id="GO:0045053">
    <property type="term" value="P:protein retention in Golgi apparatus"/>
    <property type="evidence" value="ECO:0000315"/>
    <property type="project" value="SGD"/>
</dbReference>
<dbReference type="GO" id="GO:0009306">
    <property type="term" value="P:protein secretion"/>
    <property type="evidence" value="ECO:0000315"/>
    <property type="project" value="CAFA"/>
</dbReference>
<dbReference type="GO" id="GO:0006623">
    <property type="term" value="P:protein targeting to vacuole"/>
    <property type="evidence" value="ECO:0000315"/>
    <property type="project" value="SGD"/>
</dbReference>
<dbReference type="GO" id="GO:0043328">
    <property type="term" value="P:protein transport to vacuole involved in ubiquitin-dependent protein catabolic process via the multivesicular body sorting pathway"/>
    <property type="evidence" value="ECO:0000318"/>
    <property type="project" value="GO_Central"/>
</dbReference>
<dbReference type="GO" id="GO:0043162">
    <property type="term" value="P:ubiquitin-dependent protein catabolic process via the multivesicular body sorting pathway"/>
    <property type="evidence" value="ECO:0000314"/>
    <property type="project" value="ComplexPortal"/>
</dbReference>
<dbReference type="CDD" id="cd21385">
    <property type="entry name" value="GAT_Vps27"/>
    <property type="match status" value="1"/>
</dbReference>
<dbReference type="CDD" id="cd16979">
    <property type="entry name" value="VHS_Vps27"/>
    <property type="match status" value="1"/>
</dbReference>
<dbReference type="FunFam" id="1.20.5.1940:FF:000004">
    <property type="entry name" value="Vacuolar protein sorting-associated protein 27"/>
    <property type="match status" value="1"/>
</dbReference>
<dbReference type="FunFam" id="1.25.40.90:FF:000039">
    <property type="entry name" value="Vacuolar protein sorting-associated protein 27"/>
    <property type="match status" value="1"/>
</dbReference>
<dbReference type="FunFam" id="3.30.40.10:FF:000161">
    <property type="entry name" value="Vacuolar protein sorting-associated protein 27"/>
    <property type="match status" value="1"/>
</dbReference>
<dbReference type="Gene3D" id="1.20.5.1940">
    <property type="match status" value="1"/>
</dbReference>
<dbReference type="Gene3D" id="1.25.40.90">
    <property type="match status" value="1"/>
</dbReference>
<dbReference type="Gene3D" id="6.10.140.100">
    <property type="match status" value="1"/>
</dbReference>
<dbReference type="Gene3D" id="3.30.40.10">
    <property type="entry name" value="Zinc/RING finger domain, C3HC4 (zinc finger)"/>
    <property type="match status" value="1"/>
</dbReference>
<dbReference type="InterPro" id="IPR008942">
    <property type="entry name" value="ENTH_VHS"/>
</dbReference>
<dbReference type="InterPro" id="IPR017073">
    <property type="entry name" value="HGS/VPS27"/>
</dbReference>
<dbReference type="InterPro" id="IPR003903">
    <property type="entry name" value="UIM_dom"/>
</dbReference>
<dbReference type="InterPro" id="IPR002014">
    <property type="entry name" value="VHS_dom"/>
</dbReference>
<dbReference type="InterPro" id="IPR049425">
    <property type="entry name" value="Vps27_GAT-like"/>
</dbReference>
<dbReference type="InterPro" id="IPR000306">
    <property type="entry name" value="Znf_FYVE"/>
</dbReference>
<dbReference type="InterPro" id="IPR017455">
    <property type="entry name" value="Znf_FYVE-rel"/>
</dbReference>
<dbReference type="InterPro" id="IPR011011">
    <property type="entry name" value="Znf_FYVE_PHD"/>
</dbReference>
<dbReference type="InterPro" id="IPR013083">
    <property type="entry name" value="Znf_RING/FYVE/PHD"/>
</dbReference>
<dbReference type="PANTHER" id="PTHR47794">
    <property type="entry name" value="VACUOLAR PROTEIN SORTING-ASSOCIATED PROTEIN 27"/>
    <property type="match status" value="1"/>
</dbReference>
<dbReference type="PANTHER" id="PTHR47794:SF1">
    <property type="entry name" value="VACUOLAR PROTEIN SORTING-ASSOCIATED PROTEIN 27"/>
    <property type="match status" value="1"/>
</dbReference>
<dbReference type="Pfam" id="PF01363">
    <property type="entry name" value="FYVE"/>
    <property type="match status" value="1"/>
</dbReference>
<dbReference type="Pfam" id="PF02809">
    <property type="entry name" value="UIM"/>
    <property type="match status" value="2"/>
</dbReference>
<dbReference type="Pfam" id="PF00790">
    <property type="entry name" value="VHS"/>
    <property type="match status" value="1"/>
</dbReference>
<dbReference type="Pfam" id="PF21356">
    <property type="entry name" value="Vps27_GAT-like"/>
    <property type="match status" value="1"/>
</dbReference>
<dbReference type="PIRSF" id="PIRSF036956">
    <property type="entry name" value="Hrs_Vps27"/>
    <property type="match status" value="1"/>
</dbReference>
<dbReference type="SMART" id="SM00064">
    <property type="entry name" value="FYVE"/>
    <property type="match status" value="1"/>
</dbReference>
<dbReference type="SMART" id="SM00726">
    <property type="entry name" value="UIM"/>
    <property type="match status" value="2"/>
</dbReference>
<dbReference type="SMART" id="SM00288">
    <property type="entry name" value="VHS"/>
    <property type="match status" value="1"/>
</dbReference>
<dbReference type="SUPFAM" id="SSF48464">
    <property type="entry name" value="ENTH/VHS domain"/>
    <property type="match status" value="1"/>
</dbReference>
<dbReference type="SUPFAM" id="SSF57903">
    <property type="entry name" value="FYVE/PHD zinc finger"/>
    <property type="match status" value="1"/>
</dbReference>
<dbReference type="PROSITE" id="PS50330">
    <property type="entry name" value="UIM"/>
    <property type="match status" value="2"/>
</dbReference>
<dbReference type="PROSITE" id="PS50179">
    <property type="entry name" value="VHS"/>
    <property type="match status" value="1"/>
</dbReference>
<dbReference type="PROSITE" id="PS50178">
    <property type="entry name" value="ZF_FYVE"/>
    <property type="match status" value="1"/>
</dbReference>
<feature type="chain" id="PRO_0000065893" description="Vacuolar protein sorting-associated protein 27">
    <location>
        <begin position="1"/>
        <end position="622"/>
    </location>
</feature>
<feature type="domain" description="VHS" evidence="3">
    <location>
        <begin position="18"/>
        <end position="149"/>
    </location>
</feature>
<feature type="domain" description="UIM 1" evidence="2">
    <location>
        <begin position="258"/>
        <end position="277"/>
    </location>
</feature>
<feature type="domain" description="UIM 2" evidence="2">
    <location>
        <begin position="301"/>
        <end position="320"/>
    </location>
</feature>
<feature type="zinc finger region" description="FYVE-type; atypical" evidence="1">
    <location>
        <begin position="170"/>
        <end position="230"/>
    </location>
</feature>
<feature type="region of interest" description="Disordered" evidence="4">
    <location>
        <begin position="236"/>
        <end position="260"/>
    </location>
</feature>
<feature type="region of interest" description="Disordered" evidence="4">
    <location>
        <begin position="317"/>
        <end position="348"/>
    </location>
</feature>
<feature type="region of interest" description="Disordered" evidence="4">
    <location>
        <begin position="462"/>
        <end position="622"/>
    </location>
</feature>
<feature type="compositionally biased region" description="Basic residues" evidence="4">
    <location>
        <begin position="239"/>
        <end position="249"/>
    </location>
</feature>
<feature type="compositionally biased region" description="Basic and acidic residues" evidence="4">
    <location>
        <begin position="317"/>
        <end position="328"/>
    </location>
</feature>
<feature type="compositionally biased region" description="Polar residues" evidence="4">
    <location>
        <begin position="462"/>
        <end position="500"/>
    </location>
</feature>
<feature type="compositionally biased region" description="Acidic residues" evidence="4">
    <location>
        <begin position="533"/>
        <end position="548"/>
    </location>
</feature>
<feature type="binding site" evidence="1">
    <location>
        <position position="176"/>
    </location>
    <ligand>
        <name>Zn(2+)</name>
        <dbReference type="ChEBI" id="CHEBI:29105"/>
        <label>1</label>
    </ligand>
</feature>
<feature type="binding site" evidence="1">
    <location>
        <position position="179"/>
    </location>
    <ligand>
        <name>Zn(2+)</name>
        <dbReference type="ChEBI" id="CHEBI:29105"/>
        <label>1</label>
    </ligand>
</feature>
<feature type="binding site" evidence="1">
    <location>
        <position position="192"/>
    </location>
    <ligand>
        <name>Zn(2+)</name>
        <dbReference type="ChEBI" id="CHEBI:29105"/>
        <label>2</label>
    </ligand>
</feature>
<feature type="binding site" evidence="1">
    <location>
        <position position="195"/>
    </location>
    <ligand>
        <name>Zn(2+)</name>
        <dbReference type="ChEBI" id="CHEBI:29105"/>
        <label>2</label>
    </ligand>
</feature>
<feature type="binding site" evidence="1">
    <location>
        <position position="200"/>
    </location>
    <ligand>
        <name>Zn(2+)</name>
        <dbReference type="ChEBI" id="CHEBI:29105"/>
        <label>1</label>
    </ligand>
</feature>
<feature type="binding site" evidence="1">
    <location>
        <position position="203"/>
    </location>
    <ligand>
        <name>Zn(2+)</name>
        <dbReference type="ChEBI" id="CHEBI:29105"/>
        <label>1</label>
    </ligand>
</feature>
<feature type="binding site" evidence="1">
    <location>
        <position position="222"/>
    </location>
    <ligand>
        <name>Zn(2+)</name>
        <dbReference type="ChEBI" id="CHEBI:29105"/>
        <label>2</label>
    </ligand>
</feature>
<feature type="binding site" evidence="1">
    <location>
        <position position="225"/>
    </location>
    <ligand>
        <name>Zn(2+)</name>
        <dbReference type="ChEBI" id="CHEBI:29105"/>
        <label>2</label>
    </ligand>
</feature>
<feature type="modified residue" description="Phosphoserine" evidence="30 31 32">
    <location>
        <position position="157"/>
    </location>
</feature>
<feature type="modified residue" description="Phosphoserine" evidence="31">
    <location>
        <position position="495"/>
    </location>
</feature>
<feature type="modified residue" description="Phosphoserine" evidence="32">
    <location>
        <position position="613"/>
    </location>
</feature>
<feature type="cross-link" description="Glycyl lysine isopeptide (Lys-Gly) (interchain with G-Cter in ubiquitin)" evidence="33">
    <location>
        <position position="294"/>
    </location>
</feature>
<feature type="mutagenesis site" description="Decreases the association to PtdIns(3)P containing membranes." evidence="9">
    <original>LL</original>
    <variation>AA</variation>
    <location>
        <begin position="185"/>
        <end position="186"/>
    </location>
</feature>
<feature type="mutagenesis site" description="Decreases the association to PtdIns(3)P containing membranes." evidence="9">
    <original>R</original>
    <variation>A</variation>
    <location>
        <position position="193"/>
    </location>
</feature>
<feature type="mutagenesis site" description="Strongly reduces the ubiquitin-binding activity." evidence="8">
    <original>S</original>
    <variation>D</variation>
    <location>
        <position position="270"/>
    </location>
</feature>
<feature type="mutagenesis site" description="Strongly reduces the ubiquitin-binding activity." evidence="8">
    <original>S</original>
    <variation>D</variation>
    <location>
        <position position="313"/>
    </location>
</feature>
<feature type="sequence conflict" description="In Ref. 1; AAA96002." evidence="29" ref="1">
    <original>KL</original>
    <variation>NV</variation>
    <location>
        <begin position="321"/>
        <end position="322"/>
    </location>
</feature>
<feature type="turn" evidence="37">
    <location>
        <begin position="177"/>
        <end position="179"/>
    </location>
</feature>
<feature type="turn" evidence="37">
    <location>
        <begin position="193"/>
        <end position="195"/>
    </location>
</feature>
<feature type="helix" evidence="37">
    <location>
        <begin position="201"/>
        <end position="203"/>
    </location>
</feature>
<feature type="strand" evidence="37">
    <location>
        <begin position="206"/>
        <end position="210"/>
    </location>
</feature>
<feature type="helix" evidence="37">
    <location>
        <begin position="211"/>
        <end position="213"/>
    </location>
</feature>
<feature type="strand" evidence="37">
    <location>
        <begin position="215"/>
        <end position="221"/>
    </location>
</feature>
<feature type="helix" evidence="37">
    <location>
        <begin position="223"/>
        <end position="231"/>
    </location>
</feature>
<feature type="strand" evidence="35">
    <location>
        <begin position="251"/>
        <end position="253"/>
    </location>
</feature>
<feature type="helix" evidence="39">
    <location>
        <begin position="256"/>
        <end position="269"/>
    </location>
</feature>
<feature type="helix" evidence="36">
    <location>
        <begin position="274"/>
        <end position="276"/>
    </location>
</feature>
<feature type="helix" evidence="34">
    <location>
        <begin position="304"/>
        <end position="318"/>
    </location>
</feature>
<feature type="helix" evidence="38">
    <location>
        <begin position="352"/>
        <end position="369"/>
    </location>
</feature>
<feature type="turn" evidence="38">
    <location>
        <begin position="375"/>
        <end position="379"/>
    </location>
</feature>
<feature type="helix" evidence="38">
    <location>
        <begin position="381"/>
        <end position="436"/>
    </location>
</feature>
<name>VPS27_YEAST</name>
<accession>P40343</accession>
<accession>D6W1I1</accession>
<comment type="function">
    <text evidence="5 6 7 10 12 15 16 17 18 19 21 23 24 25 26 27 28">Component of the ESCRT-0 complex which is the sorting receptor for ubiquitinated cargo proteins at the multivesicular body (MVB) and recruits ESCRT-I to the MVB outer membrane (PubMed:11416128, PubMed:11872141, PubMed:12055639, PubMed:12900393, PubMed:14581452, PubMed:1493335, PubMed:15086794, PubMed:15107463, PubMed:15166140, PubMed:17135292, PubMed:18508771, PubMed:3062374, PubMed:9265642). Controls exit from the prevacuolar compartment (PVC) in both the forward direction to the vacuole and the return to the Golgi (PubMed:11208109, PubMed:8649377, PubMed:9015300). Allows VPS10 to return to the (trans-Golgi network) TGN from the PVC (PubMed:8649377). Might also function as an alternate adapter in the COPIb clathrin-like coat (PubMed:17101773).</text>
</comment>
<comment type="subunit">
    <text evidence="8 10 11 12 15 17 18 21 24">Component of the ESCRT-0 complex composed of HSE1 and VPS27 (PubMed:12055639, PubMed:14581452, PubMed:15086794). Interacts with ENT3 and ENT5, the ESCRT-I subunits VPS23 and VPS28 and with the COPIb subunits SEC27, SEC28 and SEC33 (PubMed:12900393, PubMed:15107463, PubMed:17101773). May form a complex composed of VPS27, HSE1 and DOA1 (PubMed:18508771). Interacts with DOA1 (PubMed:18508771). Interacts with ubiquitin (PubMed:11988742, PubMed:12750381, PubMed:14581452).</text>
</comment>
<comment type="interaction">
    <interactant intactId="EBI-20380">
        <id>P40343</id>
    </interactant>
    <interactant intactId="EBI-1382">
        <id>P38753</id>
        <label>HSE1</label>
    </interactant>
    <organismsDiffer>false</organismsDiffer>
    <experiments>9</experiments>
</comment>
<comment type="interaction">
    <interactant intactId="EBI-20380">
        <id>P40343</id>
    </interactant>
    <interactant intactId="EBI-4884">
        <id>P40509</id>
        <label>SEC28</label>
    </interactant>
    <organismsDiffer>false</organismsDiffer>
    <experiments>2</experiments>
</comment>
<comment type="interaction">
    <interactant intactId="EBI-20380">
        <id>P40343</id>
    </interactant>
    <interactant intactId="EBI-411625">
        <id>P25604</id>
        <label>STP22</label>
    </interactant>
    <organismsDiffer>false</organismsDiffer>
    <experiments>8</experiments>
</comment>
<comment type="interaction">
    <interactant intactId="EBI-20380">
        <id>P40343</id>
    </interactant>
    <interactant intactId="EBI-5333021">
        <id>P0CG53</id>
        <label>UBB</label>
    </interactant>
    <organismsDiffer>true</organismsDiffer>
    <experiments>6</experiments>
</comment>
<comment type="subcellular location">
    <subcellularLocation>
        <location evidence="9 12 13 20 21 22">Endosome membrane</location>
        <topology evidence="9 12 13 20 21 22">Peripheral membrane protein</topology>
        <orientation evidence="9 12 13 20 21 22">Cytoplasmic side</orientation>
    </subcellularLocation>
</comment>
<comment type="domain">
    <text>The FYVE domain is involved in the binding to phosphatidylinositol 3-phosphate (PtdIns(3)P) which is required for the association to endosomal membranes.</text>
</comment>
<comment type="domain">
    <text>Both IUM domains are necessary for efficient binding to ubiquitin.</text>
</comment>
<comment type="miscellaneous">
    <text evidence="14">Present with 172 molecules/cell in log phase SD medium.</text>
</comment>
<comment type="similarity">
    <text evidence="29">Belongs to the VPS27 family.</text>
</comment>
<reference key="1">
    <citation type="journal article" date="1995" name="J. Cell Biol.">
        <title>VPS27 controls vacuolar and endocytic traffic through a prevacuolar compartment in Saccharomyces cerevisiae.</title>
        <authorList>
            <person name="Piper R.C."/>
            <person name="Cooper A.A."/>
            <person name="Yang H."/>
            <person name="Stevens T.H."/>
        </authorList>
    </citation>
    <scope>NUCLEOTIDE SEQUENCE [GENOMIC DNA]</scope>
</reference>
<reference key="2">
    <citation type="journal article" date="1994" name="Yeast">
        <title>Twelve open reading frames revealed in the 23.6 kb segment flanking the centromere on the Saccharomyces cerevisiae chromosome XIV right arm.</title>
        <authorList>
            <person name="Verhasselt P."/>
            <person name="Aert R."/>
            <person name="Voet M."/>
            <person name="Volckaert G."/>
        </authorList>
    </citation>
    <scope>NUCLEOTIDE SEQUENCE [GENOMIC DNA]</scope>
    <source>
        <strain>ATCC 96604 / S288c / FY1679</strain>
    </source>
</reference>
<reference key="3">
    <citation type="journal article" date="1997" name="Nature">
        <title>The nucleotide sequence of Saccharomyces cerevisiae chromosome XIV and its evolutionary implications.</title>
        <authorList>
            <person name="Philippsen P."/>
            <person name="Kleine K."/>
            <person name="Poehlmann R."/>
            <person name="Duesterhoeft A."/>
            <person name="Hamberg K."/>
            <person name="Hegemann J.H."/>
            <person name="Obermaier B."/>
            <person name="Urrestarazu L.A."/>
            <person name="Aert R."/>
            <person name="Albermann K."/>
            <person name="Altmann R."/>
            <person name="Andre B."/>
            <person name="Baladron V."/>
            <person name="Ballesta J.P.G."/>
            <person name="Becam A.-M."/>
            <person name="Beinhauer J.D."/>
            <person name="Boskovic J."/>
            <person name="Buitrago M.J."/>
            <person name="Bussereau F."/>
            <person name="Coster F."/>
            <person name="Crouzet M."/>
            <person name="D'Angelo M."/>
            <person name="Dal Pero F."/>
            <person name="De Antoni A."/>
            <person name="del Rey F."/>
            <person name="Doignon F."/>
            <person name="Domdey H."/>
            <person name="Dubois E."/>
            <person name="Fiedler T.A."/>
            <person name="Fleig U."/>
            <person name="Floeth M."/>
            <person name="Fritz C."/>
            <person name="Gaillardin C."/>
            <person name="Garcia-Cantalejo J.M."/>
            <person name="Glansdorff N."/>
            <person name="Goffeau A."/>
            <person name="Gueldener U."/>
            <person name="Herbert C.J."/>
            <person name="Heumann K."/>
            <person name="Heuss-Neitzel D."/>
            <person name="Hilbert H."/>
            <person name="Hinni K."/>
            <person name="Iraqui Houssaini I."/>
            <person name="Jacquet M."/>
            <person name="Jimenez A."/>
            <person name="Jonniaux J.-L."/>
            <person name="Karpfinger-Hartl L."/>
            <person name="Lanfranchi G."/>
            <person name="Lepingle A."/>
            <person name="Levesque H."/>
            <person name="Lyck R."/>
            <person name="Maftahi M."/>
            <person name="Mallet L."/>
            <person name="Maurer C.T.C."/>
            <person name="Messenguy F."/>
            <person name="Mewes H.-W."/>
            <person name="Moestl D."/>
            <person name="Nasr F."/>
            <person name="Nicaud J.-M."/>
            <person name="Niedenthal R.K."/>
            <person name="Pandolfo D."/>
            <person name="Pierard A."/>
            <person name="Piravandi E."/>
            <person name="Planta R.J."/>
            <person name="Pohl T.M."/>
            <person name="Purnelle B."/>
            <person name="Rebischung C."/>
            <person name="Remacha M.A."/>
            <person name="Revuelta J.L."/>
            <person name="Rinke M."/>
            <person name="Saiz J.E."/>
            <person name="Sartorello F."/>
            <person name="Scherens B."/>
            <person name="Sen-Gupta M."/>
            <person name="Soler-Mira A."/>
            <person name="Urbanus J.H.M."/>
            <person name="Valle G."/>
            <person name="Van Dyck L."/>
            <person name="Verhasselt P."/>
            <person name="Vierendeels F."/>
            <person name="Vissers S."/>
            <person name="Voet M."/>
            <person name="Volckaert G."/>
            <person name="Wach A."/>
            <person name="Wambutt R."/>
            <person name="Wedler H."/>
            <person name="Zollner A."/>
            <person name="Hani J."/>
        </authorList>
    </citation>
    <scope>NUCLEOTIDE SEQUENCE [LARGE SCALE GENOMIC DNA]</scope>
    <source>
        <strain>ATCC 204508 / S288c</strain>
    </source>
</reference>
<reference key="4">
    <citation type="journal article" date="2014" name="G3 (Bethesda)">
        <title>The reference genome sequence of Saccharomyces cerevisiae: Then and now.</title>
        <authorList>
            <person name="Engel S.R."/>
            <person name="Dietrich F.S."/>
            <person name="Fisk D.G."/>
            <person name="Binkley G."/>
            <person name="Balakrishnan R."/>
            <person name="Costanzo M.C."/>
            <person name="Dwight S.S."/>
            <person name="Hitz B.C."/>
            <person name="Karra K."/>
            <person name="Nash R.S."/>
            <person name="Weng S."/>
            <person name="Wong E.D."/>
            <person name="Lloyd P."/>
            <person name="Skrzypek M.S."/>
            <person name="Miyasato S.R."/>
            <person name="Simison M."/>
            <person name="Cherry J.M."/>
        </authorList>
    </citation>
    <scope>GENOME REANNOTATION</scope>
    <source>
        <strain>ATCC 204508 / S288c</strain>
    </source>
</reference>
<reference key="5">
    <citation type="journal article" date="1988" name="Mol. Cell. Biol.">
        <title>Protein sorting in Saccharomyces cerevisiae: isolation of mutants defective in the delivery and processing of multiple vacuolar hydrolases.</title>
        <authorList>
            <person name="Robinson J.S."/>
            <person name="Klionsky D.J."/>
            <person name="Banta L.M."/>
            <person name="Emr S.D."/>
        </authorList>
    </citation>
    <scope>FUNCTION</scope>
</reference>
<reference key="6">
    <citation type="journal article" date="1992" name="Mol. Biol. Cell">
        <title>Morphological classification of the yeast vacuolar protein sorting mutants: evidence for a prevacuolar compartment in class E vps mutants.</title>
        <authorList>
            <person name="Raymond C.K."/>
            <person name="Howald-Stevenson I."/>
            <person name="Vater C.A."/>
            <person name="Stevens T.H."/>
        </authorList>
    </citation>
    <scope>FUNCTION</scope>
</reference>
<reference key="7">
    <citation type="journal article" date="1996" name="Mol. Cell. Biol.">
        <title>The newly identified yeast GRD genes are required for retention of late-Golgi membrane proteins.</title>
        <authorList>
            <person name="Nothwehr S.F."/>
            <person name="Bryant N.J."/>
            <person name="Stevens T.H."/>
        </authorList>
    </citation>
    <scope>FUNCTION</scope>
</reference>
<reference key="8">
    <citation type="journal article" date="1997" name="J. Cell Biol.">
        <title>Two separate signals act independently to localize a yeast late Golgi membrane protein through a combination of retrieval and retention.</title>
        <authorList>
            <person name="Bryant N.J."/>
            <person name="Stevens T.H."/>
        </authorList>
    </citation>
    <scope>FUNCTION</scope>
</reference>
<reference key="9">
    <citation type="journal article" date="1997" name="J. Cell Biol.">
        <title>Novel genes involved in endosomal traffic in yeast revealed by suppression of a targeting-defective plasma membrane ATPase mutant.</title>
        <authorList>
            <person name="Luo W.-J."/>
            <person name="Chang A."/>
        </authorList>
    </citation>
    <scope>FUNCTION</scope>
</reference>
<reference key="10">
    <citation type="journal article" date="1998" name="Mol. Cell">
        <title>Phosphatidylinositol(3)-phosphate signaling mediated by specific binding to RING FYVE domains.</title>
        <authorList>
            <person name="Burd C.G."/>
            <person name="Emr S.D."/>
        </authorList>
    </citation>
    <scope>DOMAIN</scope>
    <scope>PHOSPHATIDYLINOSITOL 3-PHOSPHATE BINDING</scope>
</reference>
<reference key="11">
    <citation type="journal article" date="2000" name="Traffic">
        <title>Pep12p is a multifunctional yeast syntaxin that controls entry of biosynthetic, endocytic and retrograde traffic into the prevacuolar compartment.</title>
        <authorList>
            <person name="Gerrard S.R."/>
            <person name="Levi B.P."/>
            <person name="Stevens T.H."/>
        </authorList>
    </citation>
    <scope>FUNCTION</scope>
</reference>
<reference key="12">
    <citation type="journal article" date="2001" name="Mol. Cell. Biol.">
        <title>Deubiquitination step in the endocytic pathway of yeast plasma membrane proteins: crucial role of Doa4p ubiquitin isopeptidase.</title>
        <authorList>
            <person name="Dupre S."/>
            <person name="Haguenauer-Tsapis R."/>
        </authorList>
    </citation>
    <scope>FUNCTION</scope>
</reference>
<reference key="13">
    <citation type="journal article" date="2002" name="J. Biol. Chem.">
        <title>Phosphatidylinositol 3-phosphate induces the membrane penetration of the FYVE domains of Vps27p and Hrs.</title>
        <authorList>
            <person name="Stahelin R.V."/>
            <person name="Long F."/>
            <person name="Diraviyam K."/>
            <person name="Bruzik K.S."/>
            <person name="Murray D."/>
            <person name="Cho W."/>
        </authorList>
    </citation>
    <scope>DOMAIN</scope>
    <scope>SUBCELLULAR LOCATION</scope>
    <scope>MUTAGENESIS OF 185-LEU-LEU-186 AND ARG-193</scope>
</reference>
<reference key="14">
    <citation type="journal article" date="2002" name="Nat. Cell Biol.">
        <title>Epsins and Vps27p/Hrs contain ubiquitin-binding domains that function in receptor endocytosis.</title>
        <authorList>
            <person name="Shih S.C."/>
            <person name="Katzmann D.J."/>
            <person name="Schnell J.D."/>
            <person name="Sutanto M."/>
            <person name="Emr S.D."/>
            <person name="Hicke L."/>
        </authorList>
    </citation>
    <scope>DOMAINS</scope>
    <scope>INTERACTION WITH UBIQUITIN</scope>
    <scope>MUTAGENESIS OF SER-270 AND SER-313</scope>
</reference>
<reference key="15">
    <citation type="journal article" date="2002" name="Nat. Cell Biol.">
        <title>The Vps27p-Hse1p complex binds ubiquitin and mediates endosomal protein sorting.</title>
        <authorList>
            <person name="Bilodeau P.S."/>
            <person name="Urbanowski J.L."/>
            <person name="Winistorfer S.C."/>
            <person name="Piper R.C."/>
        </authorList>
    </citation>
    <scope>IDENTIFICATION IN THE ESCRT-0 COMPLEX</scope>
    <scope>FUNCTION OF THE ESCRT-0 COMPLEX</scope>
</reference>
<reference key="16">
    <citation type="journal article" date="2002" name="Traffic">
        <title>Ordering of compartments in the yeast endocytic pathway.</title>
        <authorList>
            <person name="Prescianotto-Baschong C."/>
            <person name="Riezman H."/>
        </authorList>
    </citation>
    <scope>FUNCTION</scope>
</reference>
<reference key="17">
    <citation type="journal article" date="2003" name="J. Cell Biol.">
        <title>Vps27 recruits ESCRT machinery to endosomes during MVB sorting.</title>
        <authorList>
            <person name="Katzmann D.J."/>
            <person name="Stefan C.J."/>
            <person name="Babst M."/>
            <person name="Emr S.D."/>
        </authorList>
    </citation>
    <scope>FUNCTION</scope>
    <scope>SUBCELLULAR LOCATION</scope>
    <scope>INTERACTION WITH VPS23 AND VPS28</scope>
</reference>
<reference key="18">
    <citation type="journal article" date="2003" name="J. Cell Biol.">
        <title>Vps27-Hse1 and ESCRT-I complexes cooperate to increase efficiency of sorting ubiquitinated proteins at the endosome.</title>
        <authorList>
            <person name="Bilodeau P.S."/>
            <person name="Winistorfer S.C."/>
            <person name="Kearney W.R."/>
            <person name="Robertson A.D."/>
            <person name="Piper R.C."/>
        </authorList>
    </citation>
    <scope>FUNCTION OF THE ESCRT-0 COMPLEX</scope>
    <scope>INTERACTION WITH UBIQUITIN</scope>
</reference>
<reference key="19">
    <citation type="journal article" date="2003" name="J. Mol. Biol.">
        <title>Computer modeling of the membrane interaction of FYVE domains.</title>
        <authorList>
            <person name="Diraviyam K."/>
            <person name="Stahelin R.V."/>
            <person name="Cho W."/>
            <person name="Murray D."/>
        </authorList>
    </citation>
    <scope>DOMAIN</scope>
</reference>
<reference key="20">
    <citation type="journal article" date="2003" name="Nature">
        <title>Global analysis of protein localization in budding yeast.</title>
        <authorList>
            <person name="Huh W.-K."/>
            <person name="Falvo J.V."/>
            <person name="Gerke L.C."/>
            <person name="Carroll A.S."/>
            <person name="Howson R.W."/>
            <person name="Weissman J.S."/>
            <person name="O'Shea E.K."/>
        </authorList>
    </citation>
    <scope>SUBCELLULAR LOCATION [LARGE SCALE ANALYSIS]</scope>
</reference>
<reference key="21">
    <citation type="journal article" date="2003" name="Nature">
        <title>Global analysis of protein expression in yeast.</title>
        <authorList>
            <person name="Ghaemmaghami S."/>
            <person name="Huh W.-K."/>
            <person name="Bower K."/>
            <person name="Howson R.W."/>
            <person name="Belle A."/>
            <person name="Dephoure N."/>
            <person name="O'Shea E.K."/>
            <person name="Weissman J.S."/>
        </authorList>
    </citation>
    <scope>LEVEL OF PROTEIN EXPRESSION [LARGE SCALE ANALYSIS]</scope>
</reference>
<reference key="22">
    <citation type="journal article" date="2004" name="Genetics">
        <title>Yeast Mn2+ transporter, Smf1p, is regulated by ubiquitin-dependent vacuolar protein sorting.</title>
        <authorList>
            <person name="Eguez L."/>
            <person name="Chung Y.-S."/>
            <person name="Kuchibhatla A."/>
            <person name="Paidhungat M."/>
            <person name="Garrett S."/>
        </authorList>
    </citation>
    <scope>FUNCTION</scope>
</reference>
<reference key="23">
    <citation type="journal article" date="2004" name="Mol. Biol. Cell">
        <title>Ent5p is required with Ent3p and Vps27p for ubiquitin-dependent protein sorting into the multivesicular body.</title>
        <authorList>
            <person name="Eugster A."/>
            <person name="Pecheur E.-I."/>
            <person name="Michel F."/>
            <person name="Winsor B."/>
            <person name="Letourneur F."/>
            <person name="Friant S."/>
        </authorList>
    </citation>
    <scope>FUNCTION</scope>
    <scope>INTERACTION WITH ENT3 AND ENT5</scope>
</reference>
<reference key="24">
    <citation type="journal article" date="2004" name="Mol. Biol. Cell">
        <title>Essential role for the myotubularin-related phosphatase Ymr1p and the synaptojanin-like phosphatases Sjl2p and Sjl3p in regulation of phosphatidylinositol 3-phosphate in yeast.</title>
        <authorList>
            <person name="Parrish W.R."/>
            <person name="Stefan C.J."/>
            <person name="Emr S.D."/>
        </authorList>
    </citation>
    <scope>SUBCELLULAR LOCATION</scope>
</reference>
<reference key="25">
    <citation type="journal article" date="2004" name="Traffic">
        <title>Protein-protein interactions of ESCRT complexes in the yeast Saccharomyces cerevisiae.</title>
        <authorList>
            <person name="Bowers K."/>
            <person name="Lottridge J."/>
            <person name="Helliwell S.B."/>
            <person name="Goldthwaite L.M."/>
            <person name="Luzio J.P."/>
            <person name="Stevens T.H."/>
        </authorList>
    </citation>
    <scope>INTERACTION WITH HSE1 AND VPS23</scope>
    <scope>FUNCTION OF THE ESCRT-0 COMPLEX</scope>
</reference>
<reference key="26">
    <citation type="journal article" date="2005" name="Mol. Cell. Proteomics">
        <title>Quantitative phosphoproteomics applied to the yeast pheromone signaling pathway.</title>
        <authorList>
            <person name="Gruhler A."/>
            <person name="Olsen J.V."/>
            <person name="Mohammed S."/>
            <person name="Mortensen P."/>
            <person name="Faergeman N.J."/>
            <person name="Mann M."/>
            <person name="Jensen O.N."/>
        </authorList>
    </citation>
    <scope>PHOSPHORYLATION [LARGE SCALE ANALYSIS] AT SER-157</scope>
    <scope>IDENTIFICATION BY MASS SPECTROMETRY [LARGE SCALE ANALYSIS]</scope>
    <source>
        <strain>YAL6B</strain>
    </source>
</reference>
<reference key="27">
    <citation type="journal article" date="2007" name="J. Proteome Res.">
        <title>Large-scale phosphorylation analysis of alpha-factor-arrested Saccharomyces cerevisiae.</title>
        <authorList>
            <person name="Li X."/>
            <person name="Gerber S.A."/>
            <person name="Rudner A.D."/>
            <person name="Beausoleil S.A."/>
            <person name="Haas W."/>
            <person name="Villen J."/>
            <person name="Elias J.E."/>
            <person name="Gygi S.P."/>
        </authorList>
    </citation>
    <scope>PHOSPHORYLATION [LARGE SCALE ANALYSIS] AT SER-157 AND SER-495</scope>
    <scope>IDENTIFICATION BY MASS SPECTROMETRY [LARGE SCALE ANALYSIS]</scope>
    <source>
        <strain>ADR376</strain>
    </source>
</reference>
<reference key="28">
    <citation type="journal article" date="2007" name="Mol. Cell. Biol.">
        <title>Involvement of specific COPI subunits in protein sorting from the late endosome to the vacuole in yeast.</title>
        <authorList>
            <person name="Gabriely G."/>
            <person name="Kama R."/>
            <person name="Gerst J.E."/>
        </authorList>
    </citation>
    <scope>FUNCTION</scope>
    <scope>SUBCELLULAR LOCATION</scope>
    <scope>INTERACTION WITH SEC27; SEC28 AND SEC33</scope>
</reference>
<reference key="29">
    <citation type="journal article" date="2007" name="Mol. Cell. Biol.">
        <title>Btn2, a Hook1 ortholog and potential Batten disease-related protein, mediates late endosome-Golgi protein sorting in yeast.</title>
        <authorList>
            <person name="Kama R."/>
            <person name="Robinson M."/>
            <person name="Gerst J.E."/>
        </authorList>
    </citation>
    <scope>SUBCELLULAR LOCATION</scope>
</reference>
<reference key="30">
    <citation type="journal article" date="2007" name="Mol. Biol. Cell">
        <title>Efficient cargo sorting by ESCRT-I and the subsequent release of ESCRT-I from multivesicular bodies requires the subunit Mvb12.</title>
        <authorList>
            <person name="Curtiss M."/>
            <person name="Jones C."/>
            <person name="Babst M."/>
        </authorList>
    </citation>
    <scope>FUNCTION</scope>
</reference>
<reference key="31">
    <citation type="journal article" date="2008" name="J. Biol. Chem.">
        <title>DOA1/UFD3 plays a role in sorting ubiquitinated membrane proteins into multivesicular bodies.</title>
        <authorList>
            <person name="Ren J."/>
            <person name="Pashkova N."/>
            <person name="Winistorfer S."/>
            <person name="Piper R.C."/>
        </authorList>
    </citation>
    <scope>FUNCTION</scope>
    <scope>IDENTIFICATION IN A COMPLEX WITH HSE1 AND DOA1</scope>
    <scope>INTERACTION WITH DOA1</scope>
</reference>
<reference key="32">
    <citation type="journal article" date="2008" name="Mol. Cell. Proteomics">
        <title>A multidimensional chromatography technology for in-depth phosphoproteome analysis.</title>
        <authorList>
            <person name="Albuquerque C.P."/>
            <person name="Smolka M.B."/>
            <person name="Payne S.H."/>
            <person name="Bafna V."/>
            <person name="Eng J."/>
            <person name="Zhou H."/>
        </authorList>
    </citation>
    <scope>PHOSPHORYLATION [LARGE SCALE ANALYSIS] AT SER-157 AND SER-613</scope>
    <scope>IDENTIFICATION BY MASS SPECTROMETRY [LARGE SCALE ANALYSIS]</scope>
</reference>
<reference key="33">
    <citation type="journal article" date="2009" name="Science">
        <title>Global analysis of Cdk1 substrate phosphorylation sites provides insights into evolution.</title>
        <authorList>
            <person name="Holt L.J."/>
            <person name="Tuch B.B."/>
            <person name="Villen J."/>
            <person name="Johnson A.D."/>
            <person name="Gygi S.P."/>
            <person name="Morgan D.O."/>
        </authorList>
    </citation>
    <scope>IDENTIFICATION BY MASS SPECTROMETRY [LARGE SCALE ANALYSIS]</scope>
</reference>
<reference key="34">
    <citation type="journal article" date="2012" name="Proteomics">
        <title>Sites of ubiquitin attachment in Saccharomyces cerevisiae.</title>
        <authorList>
            <person name="Starita L.M."/>
            <person name="Lo R.S."/>
            <person name="Eng J.K."/>
            <person name="von Haller P.D."/>
            <person name="Fields S."/>
        </authorList>
    </citation>
    <scope>UBIQUITINATION [LARGE SCALE ANALYSIS] AT LYS-294</scope>
    <scope>IDENTIFICATION BY MASS SPECTROMETRY [LARGE SCALE ANALYSIS]</scope>
</reference>
<reference key="35">
    <citation type="journal article" date="1999" name="Cell">
        <title>Crystal structure of a phosphatidylinositol 3-phosphate-specific membrane-targeting motif, the FYVE domain of Vps27p.</title>
        <authorList>
            <person name="Misra S."/>
            <person name="Hurley J.H."/>
        </authorList>
    </citation>
    <scope>X-RAY CRYSTALLOGRAPHY (1.15 ANGSTROMS) OF 163-230</scope>
</reference>
<reference key="36">
    <citation type="journal article" date="2003" name="EMBO J.">
        <title>Solution structure of Vps27 UIM-ubiquitin complex important for endosomal sorting and receptor downregulation.</title>
        <authorList>
            <person name="Swanson K.A."/>
            <person name="Kang R.S."/>
            <person name="Stamenova S.D."/>
            <person name="Hicke L."/>
            <person name="Radhakrishnan I."/>
        </authorList>
    </citation>
    <scope>STRUCTURE BY NMR OF 250-329</scope>
</reference>
<reference key="37">
    <citation type="journal article" date="2003" name="J. Biol. Chem.">
        <title>Structure and ubiquitin binding of the ubiquitin-interacting motif.</title>
        <authorList>
            <person name="Fisher R.D."/>
            <person name="Wang B."/>
            <person name="Alam S.L."/>
            <person name="Higginson D.S."/>
            <person name="Robinson H."/>
            <person name="Sundquist W.I."/>
            <person name="Hill C.P."/>
        </authorList>
    </citation>
    <scope>X-RAY CRYSTALLOGRAPHY (1.45 ANGSTROMS) OF 301-320</scope>
    <scope>INTERACTION WITH UBIQUITIN</scope>
</reference>
<keyword id="KW-0002">3D-structure</keyword>
<keyword id="KW-0967">Endosome</keyword>
<keyword id="KW-1017">Isopeptide bond</keyword>
<keyword id="KW-0472">Membrane</keyword>
<keyword id="KW-0479">Metal-binding</keyword>
<keyword id="KW-0597">Phosphoprotein</keyword>
<keyword id="KW-1185">Reference proteome</keyword>
<keyword id="KW-0677">Repeat</keyword>
<keyword id="KW-0832">Ubl conjugation</keyword>
<keyword id="KW-0862">Zinc</keyword>
<keyword id="KW-0863">Zinc-finger</keyword>
<evidence type="ECO:0000255" key="1">
    <source>
        <dbReference type="PROSITE-ProRule" id="PRU00091"/>
    </source>
</evidence>
<evidence type="ECO:0000255" key="2">
    <source>
        <dbReference type="PROSITE-ProRule" id="PRU00213"/>
    </source>
</evidence>
<evidence type="ECO:0000255" key="3">
    <source>
        <dbReference type="PROSITE-ProRule" id="PRU00218"/>
    </source>
</evidence>
<evidence type="ECO:0000256" key="4">
    <source>
        <dbReference type="SAM" id="MobiDB-lite"/>
    </source>
</evidence>
<evidence type="ECO:0000269" key="5">
    <source>
    </source>
</evidence>
<evidence type="ECO:0000269" key="6">
    <source>
    </source>
</evidence>
<evidence type="ECO:0000269" key="7">
    <source>
    </source>
</evidence>
<evidence type="ECO:0000269" key="8">
    <source>
    </source>
</evidence>
<evidence type="ECO:0000269" key="9">
    <source>
    </source>
</evidence>
<evidence type="ECO:0000269" key="10">
    <source>
    </source>
</evidence>
<evidence type="ECO:0000269" key="11">
    <source>
    </source>
</evidence>
<evidence type="ECO:0000269" key="12">
    <source>
    </source>
</evidence>
<evidence type="ECO:0000269" key="13">
    <source>
    </source>
</evidence>
<evidence type="ECO:0000269" key="14">
    <source>
    </source>
</evidence>
<evidence type="ECO:0000269" key="15">
    <source>
    </source>
</evidence>
<evidence type="ECO:0000269" key="16">
    <source>
    </source>
</evidence>
<evidence type="ECO:0000269" key="17">
    <source>
    </source>
</evidence>
<evidence type="ECO:0000269" key="18">
    <source>
    </source>
</evidence>
<evidence type="ECO:0000269" key="19">
    <source>
    </source>
</evidence>
<evidence type="ECO:0000269" key="20">
    <source>
    </source>
</evidence>
<evidence type="ECO:0000269" key="21">
    <source>
    </source>
</evidence>
<evidence type="ECO:0000269" key="22">
    <source>
    </source>
</evidence>
<evidence type="ECO:0000269" key="23">
    <source>
    </source>
</evidence>
<evidence type="ECO:0000269" key="24">
    <source>
    </source>
</evidence>
<evidence type="ECO:0000269" key="25">
    <source>
    </source>
</evidence>
<evidence type="ECO:0000269" key="26">
    <source>
    </source>
</evidence>
<evidence type="ECO:0000269" key="27">
    <source>
    </source>
</evidence>
<evidence type="ECO:0000269" key="28">
    <source>
    </source>
</evidence>
<evidence type="ECO:0000305" key="29"/>
<evidence type="ECO:0007744" key="30">
    <source>
    </source>
</evidence>
<evidence type="ECO:0007744" key="31">
    <source>
    </source>
</evidence>
<evidence type="ECO:0007744" key="32">
    <source>
    </source>
</evidence>
<evidence type="ECO:0007744" key="33">
    <source>
    </source>
</evidence>
<evidence type="ECO:0007829" key="34">
    <source>
        <dbReference type="PDB" id="1O06"/>
    </source>
</evidence>
<evidence type="ECO:0007829" key="35">
    <source>
        <dbReference type="PDB" id="1Q0V"/>
    </source>
</evidence>
<evidence type="ECO:0007829" key="36">
    <source>
        <dbReference type="PDB" id="1Q0W"/>
    </source>
</evidence>
<evidence type="ECO:0007829" key="37">
    <source>
        <dbReference type="PDB" id="1VFY"/>
    </source>
</evidence>
<evidence type="ECO:0007829" key="38">
    <source>
        <dbReference type="PDB" id="2PJW"/>
    </source>
</evidence>
<evidence type="ECO:0007829" key="39">
    <source>
        <dbReference type="PDB" id="6NJG"/>
    </source>
</evidence>